<keyword id="KW-0029">Amino-acid transport</keyword>
<keyword id="KW-0067">ATP-binding</keyword>
<keyword id="KW-0997">Cell inner membrane</keyword>
<keyword id="KW-1003">Cell membrane</keyword>
<keyword id="KW-0472">Membrane</keyword>
<keyword id="KW-0547">Nucleotide-binding</keyword>
<keyword id="KW-1278">Translocase</keyword>
<keyword id="KW-0813">Transport</keyword>
<accession>Q4KKK8</accession>
<protein>
    <recommendedName>
        <fullName evidence="1">Methionine import ATP-binding protein MetN 1</fullName>
        <ecNumber evidence="1">7.4.2.11</ecNumber>
    </recommendedName>
</protein>
<evidence type="ECO:0000255" key="1">
    <source>
        <dbReference type="HAMAP-Rule" id="MF_01719"/>
    </source>
</evidence>
<gene>
    <name evidence="1" type="primary">metN1</name>
    <name type="ordered locus">PFL_0073</name>
</gene>
<feature type="chain" id="PRO_0000270347" description="Methionine import ATP-binding protein MetN 1">
    <location>
        <begin position="1"/>
        <end position="335"/>
    </location>
</feature>
<feature type="domain" description="ABC transporter" evidence="1">
    <location>
        <begin position="2"/>
        <end position="242"/>
    </location>
</feature>
<feature type="binding site" evidence="1">
    <location>
        <begin position="38"/>
        <end position="45"/>
    </location>
    <ligand>
        <name>ATP</name>
        <dbReference type="ChEBI" id="CHEBI:30616"/>
    </ligand>
</feature>
<reference key="1">
    <citation type="journal article" date="2005" name="Nat. Biotechnol.">
        <title>Complete genome sequence of the plant commensal Pseudomonas fluorescens Pf-5.</title>
        <authorList>
            <person name="Paulsen I.T."/>
            <person name="Press C.M."/>
            <person name="Ravel J."/>
            <person name="Kobayashi D.Y."/>
            <person name="Myers G.S.A."/>
            <person name="Mavrodi D.V."/>
            <person name="DeBoy R.T."/>
            <person name="Seshadri R."/>
            <person name="Ren Q."/>
            <person name="Madupu R."/>
            <person name="Dodson R.J."/>
            <person name="Durkin A.S."/>
            <person name="Brinkac L.M."/>
            <person name="Daugherty S.C."/>
            <person name="Sullivan S.A."/>
            <person name="Rosovitz M.J."/>
            <person name="Gwinn M.L."/>
            <person name="Zhou L."/>
            <person name="Schneider D.J."/>
            <person name="Cartinhour S.W."/>
            <person name="Nelson W.C."/>
            <person name="Weidman J."/>
            <person name="Watkins K."/>
            <person name="Tran K."/>
            <person name="Khouri H."/>
            <person name="Pierson E.A."/>
            <person name="Pierson L.S. III"/>
            <person name="Thomashow L.S."/>
            <person name="Loper J.E."/>
        </authorList>
    </citation>
    <scope>NUCLEOTIDE SEQUENCE [LARGE SCALE GENOMIC DNA]</scope>
    <source>
        <strain>ATCC BAA-477 / NRRL B-23932 / Pf-5</strain>
    </source>
</reference>
<dbReference type="EC" id="7.4.2.11" evidence="1"/>
<dbReference type="EMBL" id="CP000076">
    <property type="protein sequence ID" value="AAY95490.1"/>
    <property type="molecule type" value="Genomic_DNA"/>
</dbReference>
<dbReference type="RefSeq" id="WP_011058461.1">
    <property type="nucleotide sequence ID" value="NC_004129.6"/>
</dbReference>
<dbReference type="SMR" id="Q4KKK8"/>
<dbReference type="STRING" id="220664.PFL_0073"/>
<dbReference type="KEGG" id="pfl:PFL_0073"/>
<dbReference type="PATRIC" id="fig|220664.5.peg.76"/>
<dbReference type="eggNOG" id="COG1135">
    <property type="taxonomic scope" value="Bacteria"/>
</dbReference>
<dbReference type="HOGENOM" id="CLU_000604_1_3_6"/>
<dbReference type="Proteomes" id="UP000008540">
    <property type="component" value="Chromosome"/>
</dbReference>
<dbReference type="GO" id="GO:0005886">
    <property type="term" value="C:plasma membrane"/>
    <property type="evidence" value="ECO:0007669"/>
    <property type="project" value="UniProtKB-SubCell"/>
</dbReference>
<dbReference type="GO" id="GO:0033232">
    <property type="term" value="F:ABC-type D-methionine transporter activity"/>
    <property type="evidence" value="ECO:0007669"/>
    <property type="project" value="UniProtKB-EC"/>
</dbReference>
<dbReference type="GO" id="GO:0005524">
    <property type="term" value="F:ATP binding"/>
    <property type="evidence" value="ECO:0007669"/>
    <property type="project" value="UniProtKB-KW"/>
</dbReference>
<dbReference type="GO" id="GO:0016887">
    <property type="term" value="F:ATP hydrolysis activity"/>
    <property type="evidence" value="ECO:0007669"/>
    <property type="project" value="InterPro"/>
</dbReference>
<dbReference type="CDD" id="cd03258">
    <property type="entry name" value="ABC_MetN_methionine_transporter"/>
    <property type="match status" value="1"/>
</dbReference>
<dbReference type="FunFam" id="3.40.50.300:FF:000056">
    <property type="entry name" value="Cell division ATP-binding protein FtsE"/>
    <property type="match status" value="1"/>
</dbReference>
<dbReference type="FunFam" id="3.30.70.260:FF:000038">
    <property type="entry name" value="Methionine import ATP-binding protein MetN"/>
    <property type="match status" value="1"/>
</dbReference>
<dbReference type="Gene3D" id="3.30.70.260">
    <property type="match status" value="1"/>
</dbReference>
<dbReference type="Gene3D" id="3.40.50.300">
    <property type="entry name" value="P-loop containing nucleotide triphosphate hydrolases"/>
    <property type="match status" value="1"/>
</dbReference>
<dbReference type="InterPro" id="IPR003593">
    <property type="entry name" value="AAA+_ATPase"/>
</dbReference>
<dbReference type="InterPro" id="IPR003439">
    <property type="entry name" value="ABC_transporter-like_ATP-bd"/>
</dbReference>
<dbReference type="InterPro" id="IPR017871">
    <property type="entry name" value="ABC_transporter-like_CS"/>
</dbReference>
<dbReference type="InterPro" id="IPR045865">
    <property type="entry name" value="ACT-like_dom_sf"/>
</dbReference>
<dbReference type="InterPro" id="IPR041701">
    <property type="entry name" value="MetN_ABC"/>
</dbReference>
<dbReference type="InterPro" id="IPR050086">
    <property type="entry name" value="MetN_ABC_transporter-like"/>
</dbReference>
<dbReference type="InterPro" id="IPR018449">
    <property type="entry name" value="NIL_domain"/>
</dbReference>
<dbReference type="InterPro" id="IPR027417">
    <property type="entry name" value="P-loop_NTPase"/>
</dbReference>
<dbReference type="PANTHER" id="PTHR43166">
    <property type="entry name" value="AMINO ACID IMPORT ATP-BINDING PROTEIN"/>
    <property type="match status" value="1"/>
</dbReference>
<dbReference type="PANTHER" id="PTHR43166:SF30">
    <property type="entry name" value="METHIONINE IMPORT ATP-BINDING PROTEIN METN"/>
    <property type="match status" value="1"/>
</dbReference>
<dbReference type="Pfam" id="PF00005">
    <property type="entry name" value="ABC_tran"/>
    <property type="match status" value="1"/>
</dbReference>
<dbReference type="Pfam" id="PF09383">
    <property type="entry name" value="NIL"/>
    <property type="match status" value="1"/>
</dbReference>
<dbReference type="SMART" id="SM00382">
    <property type="entry name" value="AAA"/>
    <property type="match status" value="1"/>
</dbReference>
<dbReference type="SMART" id="SM00930">
    <property type="entry name" value="NIL"/>
    <property type="match status" value="1"/>
</dbReference>
<dbReference type="SUPFAM" id="SSF55021">
    <property type="entry name" value="ACT-like"/>
    <property type="match status" value="1"/>
</dbReference>
<dbReference type="SUPFAM" id="SSF52540">
    <property type="entry name" value="P-loop containing nucleoside triphosphate hydrolases"/>
    <property type="match status" value="1"/>
</dbReference>
<dbReference type="PROSITE" id="PS00211">
    <property type="entry name" value="ABC_TRANSPORTER_1"/>
    <property type="match status" value="1"/>
</dbReference>
<dbReference type="PROSITE" id="PS50893">
    <property type="entry name" value="ABC_TRANSPORTER_2"/>
    <property type="match status" value="1"/>
</dbReference>
<dbReference type="PROSITE" id="PS51264">
    <property type="entry name" value="METN"/>
    <property type="match status" value="1"/>
</dbReference>
<organism>
    <name type="scientific">Pseudomonas fluorescens (strain ATCC BAA-477 / NRRL B-23932 / Pf-5)</name>
    <dbReference type="NCBI Taxonomy" id="220664"/>
    <lineage>
        <taxon>Bacteria</taxon>
        <taxon>Pseudomonadati</taxon>
        <taxon>Pseudomonadota</taxon>
        <taxon>Gammaproteobacteria</taxon>
        <taxon>Pseudomonadales</taxon>
        <taxon>Pseudomonadaceae</taxon>
        <taxon>Pseudomonas</taxon>
    </lineage>
</organism>
<name>METN1_PSEF5</name>
<comment type="function">
    <text evidence="1">Part of the ABC transporter complex MetNIQ involved in methionine import. Responsible for energy coupling to the transport system.</text>
</comment>
<comment type="catalytic activity">
    <reaction evidence="1">
        <text>L-methionine(out) + ATP + H2O = L-methionine(in) + ADP + phosphate + H(+)</text>
        <dbReference type="Rhea" id="RHEA:29779"/>
        <dbReference type="ChEBI" id="CHEBI:15377"/>
        <dbReference type="ChEBI" id="CHEBI:15378"/>
        <dbReference type="ChEBI" id="CHEBI:30616"/>
        <dbReference type="ChEBI" id="CHEBI:43474"/>
        <dbReference type="ChEBI" id="CHEBI:57844"/>
        <dbReference type="ChEBI" id="CHEBI:456216"/>
        <dbReference type="EC" id="7.4.2.11"/>
    </reaction>
</comment>
<comment type="catalytic activity">
    <reaction evidence="1">
        <text>D-methionine(out) + ATP + H2O = D-methionine(in) + ADP + phosphate + H(+)</text>
        <dbReference type="Rhea" id="RHEA:29767"/>
        <dbReference type="ChEBI" id="CHEBI:15377"/>
        <dbReference type="ChEBI" id="CHEBI:15378"/>
        <dbReference type="ChEBI" id="CHEBI:30616"/>
        <dbReference type="ChEBI" id="CHEBI:43474"/>
        <dbReference type="ChEBI" id="CHEBI:57932"/>
        <dbReference type="ChEBI" id="CHEBI:456216"/>
        <dbReference type="EC" id="7.4.2.11"/>
    </reaction>
</comment>
<comment type="subunit">
    <text evidence="1">The complex is composed of two ATP-binding proteins (MetN), two transmembrane proteins (MetI) and a solute-binding protein (MetQ).</text>
</comment>
<comment type="subcellular location">
    <subcellularLocation>
        <location evidence="1">Cell inner membrane</location>
        <topology evidence="1">Peripheral membrane protein</topology>
    </subcellularLocation>
</comment>
<comment type="similarity">
    <text evidence="1">Belongs to the ABC transporter superfamily. Methionine importer (TC 3.A.1.24) family.</text>
</comment>
<sequence length="335" mass="36742">MIEFQNVHKTYRVAGKDIPALHPTSLRVENGQVFGLIGHSGAGKSTLLRLINRLENPSGGTIVVDDEDVTALDASGLRRFRQQVGMIFQHFNLLSSKTVADNVALPLTLAGELSRSDIDRRVAELLDRVGLADHAKKYPAQLSGGQKQRVGIARALATKPKILLCDEATSALDPQTTASVLQLLAEINRELNLTIVLITHEMDVIRRVCDQVAVMDAGVIVEQGPVADVFLHPKHPTTRRFVQEDEQIDENEQRDDFAHVPGRIVRLTFQGDSTYAPLLGTVARETGVDYSILAGRIDRIKDTPYGQLTLAITGGDMEAAFARFTAADVHMEVLR</sequence>
<proteinExistence type="inferred from homology"/>